<keyword id="KW-0106">Calcium</keyword>
<keyword id="KW-0966">Cell projection</keyword>
<keyword id="KW-0969">Cilium</keyword>
<keyword id="KW-0963">Cytoplasm</keyword>
<keyword id="KW-0968">Cytoplasmic vesicle</keyword>
<keyword id="KW-0903">Direct protein sequencing</keyword>
<keyword id="KW-0282">Flagellum</keyword>
<keyword id="KW-0472">Membrane</keyword>
<keyword id="KW-0496">Mitochondrion</keyword>
<keyword id="KW-0999">Mitochondrion inner membrane</keyword>
<keyword id="KW-0597">Phosphoprotein</keyword>
<keyword id="KW-1185">Reference proteome</keyword>
<evidence type="ECO:0000250" key="1">
    <source>
        <dbReference type="UniProtKB" id="Q8C633"/>
    </source>
</evidence>
<evidence type="ECO:0000256" key="2">
    <source>
        <dbReference type="SAM" id="MobiDB-lite"/>
    </source>
</evidence>
<evidence type="ECO:0000269" key="3">
    <source>
    </source>
</evidence>
<evidence type="ECO:0000305" key="4"/>
<evidence type="ECO:0007744" key="5">
    <source>
    </source>
</evidence>
<comment type="function">
    <text evidence="1 3">Calcium-binding protein (PubMed:19271754). Essential for maintaining the structural integrity of the sperm flagella (By similarity).</text>
</comment>
<comment type="subcellular location">
    <subcellularLocation>
        <location evidence="3">Cytoplasm</location>
    </subcellularLocation>
    <subcellularLocation>
        <location evidence="3">Mitochondrion inner membrane</location>
    </subcellularLocation>
    <subcellularLocation>
        <location evidence="1">Cell projection</location>
        <location evidence="1">Cilium</location>
        <location evidence="1">Flagellum</location>
    </subcellularLocation>
    <subcellularLocation>
        <location evidence="1">Cytoplasmic vesicle</location>
        <location evidence="1">Secretory vesicle</location>
        <location evidence="1">Acrosome</location>
    </subcellularLocation>
    <text evidence="1 3">Mostly cytoplasmic, but associated with the mitochondrial inner membrane during the last steps of spermatid differentiation (PubMed:19271754). Localizes to the principal piece of the sperm flagellum (By similarity).</text>
</comment>
<comment type="tissue specificity">
    <text evidence="3">Expressed in seminiferous tubules of the testis in step 10 spermatids (stage X), subsequently increasing to reach maximal levels of step 18 elongated spermatids (stage VI) (at protein level). Strongly expressed in testis. Weakly expressed in olfactory epithelium. Expressed in spermatids of seminiferous tubules at steps 4-14 (stages IV to XIV of the seminiferous epithelium classification).</text>
</comment>
<comment type="sequence caution" evidence="4">
    <conflict type="erroneous initiation">
        <sequence resource="EMBL-CDS" id="AAF76188"/>
    </conflict>
    <text>Truncated N-terminus.</text>
</comment>
<reference key="1">
    <citation type="journal article" date="2004" name="Genome Res.">
        <title>The status, quality, and expansion of the NIH full-length cDNA project: the Mammalian Gene Collection (MGC).</title>
        <authorList>
            <consortium name="The MGC Project Team"/>
        </authorList>
    </citation>
    <scope>NUCLEOTIDE SEQUENCE [LARGE SCALE MRNA]</scope>
    <source>
        <tissue>Testis</tissue>
    </source>
</reference>
<reference key="2">
    <citation type="journal article" date="2009" name="J. Proteome Res.">
        <title>CLPH, a novel casein kinase 2-phosphorylated disordered protein, is specificallya associated with post-meiotic germ cells in rat spermatogenesis.</title>
        <authorList>
            <person name="Calvel P."/>
            <person name="Kervarrec C."/>
            <person name="Lavigne R."/>
            <person name="Vallet-Erdtmann V."/>
            <person name="Guerrois M."/>
            <person name="Rolland A."/>
            <person name="Chalmel F."/>
            <person name="Jegou B."/>
            <person name="Pineau C."/>
        </authorList>
    </citation>
    <scope>PROTEIN SEQUENCE OF 9-15; 235-245; 250-270 AND 271-294</scope>
    <scope>IDENTIFICATION BY MASS SPECTROMETRY</scope>
    <scope>PHOSPHORYLATION AT THR-280</scope>
    <scope>SUBCELLULAR LOCATION</scope>
    <scope>TISSUE SPECIFICITY</scope>
    <scope>CALCIUM-BINDING</scope>
</reference>
<reference key="3">
    <citation type="submission" date="2000-05" db="EMBL/GenBank/DDBJ databases">
        <title>A new gene from rat testis cDNA library.</title>
        <authorList>
            <person name="Wang L."/>
            <person name="Miao S."/>
            <person name="Gou D."/>
            <person name="Zhang X."/>
            <person name="Ying H."/>
            <person name="Yang J."/>
            <person name="Ma H."/>
        </authorList>
    </citation>
    <scope>NUCLEOTIDE SEQUENCE [LARGE SCALE MRNA] OF 96-390</scope>
    <source>
        <tissue>Testis</tissue>
    </source>
</reference>
<reference key="4">
    <citation type="journal article" date="2012" name="Nat. Commun.">
        <title>Quantitative maps of protein phosphorylation sites across 14 different rat organs and tissues.</title>
        <authorList>
            <person name="Lundby A."/>
            <person name="Secher A."/>
            <person name="Lage K."/>
            <person name="Nordsborg N.B."/>
            <person name="Dmytriyev A."/>
            <person name="Lundby C."/>
            <person name="Olsen J.V."/>
        </authorList>
    </citation>
    <scope>PHOSPHORYLATION [LARGE SCALE ANALYSIS] AT SER-251; SER-267; THR-280; SER-312; SER-346; SER-356; SER-371 AND SER-375</scope>
    <scope>IDENTIFICATION BY MASS SPECTROMETRY [LARGE SCALE ANALYSIS]</scope>
</reference>
<name>CABS1_RAT</name>
<organism>
    <name type="scientific">Rattus norvegicus</name>
    <name type="common">Rat</name>
    <dbReference type="NCBI Taxonomy" id="10116"/>
    <lineage>
        <taxon>Eukaryota</taxon>
        <taxon>Metazoa</taxon>
        <taxon>Chordata</taxon>
        <taxon>Craniata</taxon>
        <taxon>Vertebrata</taxon>
        <taxon>Euteleostomi</taxon>
        <taxon>Mammalia</taxon>
        <taxon>Eutheria</taxon>
        <taxon>Euarchontoglires</taxon>
        <taxon>Glires</taxon>
        <taxon>Rodentia</taxon>
        <taxon>Myomorpha</taxon>
        <taxon>Muroidea</taxon>
        <taxon>Muridae</taxon>
        <taxon>Murinae</taxon>
        <taxon>Rattus</taxon>
    </lineage>
</organism>
<protein>
    <recommendedName>
        <fullName>Calcium-binding and spermatid-specific protein 1</fullName>
    </recommendedName>
    <alternativeName>
        <fullName>Casein-like phosphoprotein</fullName>
    </alternativeName>
    <alternativeName>
        <fullName>Protein RSD-6</fullName>
    </alternativeName>
</protein>
<dbReference type="EMBL" id="BC079062">
    <property type="protein sequence ID" value="AAH79062.1"/>
    <property type="molecule type" value="mRNA"/>
</dbReference>
<dbReference type="EMBL" id="AF271155">
    <property type="protein sequence ID" value="AAF76188.1"/>
    <property type="status" value="ALT_INIT"/>
    <property type="molecule type" value="mRNA"/>
</dbReference>
<dbReference type="RefSeq" id="NP_071599.2">
    <property type="nucleotide sequence ID" value="NM_022263.2"/>
</dbReference>
<dbReference type="FunCoup" id="Q68FX6">
    <property type="interactions" value="3"/>
</dbReference>
<dbReference type="STRING" id="10116.ENSRNOP00000002670"/>
<dbReference type="iPTMnet" id="Q68FX6"/>
<dbReference type="PhosphoSitePlus" id="Q68FX6"/>
<dbReference type="PaxDb" id="10116-ENSRNOP00000002670"/>
<dbReference type="Ensembl" id="ENSRNOT00000002670.5">
    <property type="protein sequence ID" value="ENSRNOP00000002670.4"/>
    <property type="gene ID" value="ENSRNOG00000001950.5"/>
</dbReference>
<dbReference type="GeneID" id="64029"/>
<dbReference type="KEGG" id="rno:64029"/>
<dbReference type="UCSC" id="RGD:620592">
    <property type="organism name" value="rat"/>
</dbReference>
<dbReference type="AGR" id="RGD:620592"/>
<dbReference type="CTD" id="85438"/>
<dbReference type="RGD" id="620592">
    <property type="gene designation" value="Cabs1"/>
</dbReference>
<dbReference type="eggNOG" id="ENOG502RWWC">
    <property type="taxonomic scope" value="Eukaryota"/>
</dbReference>
<dbReference type="GeneTree" id="ENSGT00390000015647"/>
<dbReference type="HOGENOM" id="CLU_719537_0_0_1"/>
<dbReference type="InParanoid" id="Q68FX6"/>
<dbReference type="OMA" id="DEVNVWM"/>
<dbReference type="OrthoDB" id="9836525at2759"/>
<dbReference type="PhylomeDB" id="Q68FX6"/>
<dbReference type="TreeFam" id="TF338174"/>
<dbReference type="PRO" id="PR:Q68FX6"/>
<dbReference type="Proteomes" id="UP000002494">
    <property type="component" value="Chromosome 14"/>
</dbReference>
<dbReference type="Bgee" id="ENSRNOG00000001950">
    <property type="expression patterns" value="Expressed in testis and 4 other cell types or tissues"/>
</dbReference>
<dbReference type="GO" id="GO:0001669">
    <property type="term" value="C:acrosomal vesicle"/>
    <property type="evidence" value="ECO:0000250"/>
    <property type="project" value="UniProtKB"/>
</dbReference>
<dbReference type="GO" id="GO:0005743">
    <property type="term" value="C:mitochondrial inner membrane"/>
    <property type="evidence" value="ECO:0000314"/>
    <property type="project" value="RGD"/>
</dbReference>
<dbReference type="GO" id="GO:0031514">
    <property type="term" value="C:motile cilium"/>
    <property type="evidence" value="ECO:0000250"/>
    <property type="project" value="UniProtKB"/>
</dbReference>
<dbReference type="GO" id="GO:0097228">
    <property type="term" value="C:sperm principal piece"/>
    <property type="evidence" value="ECO:0000250"/>
    <property type="project" value="UniProtKB"/>
</dbReference>
<dbReference type="GO" id="GO:0005509">
    <property type="term" value="F:calcium ion binding"/>
    <property type="evidence" value="ECO:0000250"/>
    <property type="project" value="UniProtKB"/>
</dbReference>
<dbReference type="GO" id="GO:0030317">
    <property type="term" value="P:flagellated sperm motility"/>
    <property type="evidence" value="ECO:0000250"/>
    <property type="project" value="UniProtKB"/>
</dbReference>
<dbReference type="GO" id="GO:0007283">
    <property type="term" value="P:spermatogenesis"/>
    <property type="evidence" value="ECO:0000270"/>
    <property type="project" value="RGD"/>
</dbReference>
<dbReference type="InterPro" id="IPR026118">
    <property type="entry name" value="Ca-bd_spermatid"/>
</dbReference>
<dbReference type="PANTHER" id="PTHR22810:SF1">
    <property type="entry name" value="CALCIUM-BINDING AND SPERMATID-SPECIFIC PROTEIN 1"/>
    <property type="match status" value="1"/>
</dbReference>
<dbReference type="PANTHER" id="PTHR22810">
    <property type="entry name" value="TESTIS DEVELOPMENT PROTEIN NYD-SP26"/>
    <property type="match status" value="1"/>
</dbReference>
<dbReference type="Pfam" id="PF15367">
    <property type="entry name" value="CABS1"/>
    <property type="match status" value="1"/>
</dbReference>
<sequence length="390" mass="42256">MAEDGSPKIYSRPPRDSSKTPTEADIFFGADNTIPKSETTITSEGDHITSVNDCTADGDFSTTVNKLTPTKEKLKLEEDIEASLKSTTLPEKEITTPTETTNSKPKESITENFIPVKIGNISSPVGTVSLIDFSSNMAKEDILLATIDAEDKEVKPTTELSETQEDSSANDEDTSVPPDENTETDVSSSTSSDVPDDGAVQVTDSFSPESDVPPSTEKEVTTIPDNVAEDKVTKIDLIVSEDRPKTVTKLSDSEEEKFITVFELTNSAEKAKDNPEDPLTDEEPADGVNTWVEKDAANEAESHAVLLTAVESRYDFVVTASETNSVVVEEPHVDTKNSPEKDAAESVTNVTEEFPSVTSVVEQSGNKEDLSTNDSGIFKLLKEEPDELMM</sequence>
<proteinExistence type="evidence at protein level"/>
<gene>
    <name type="primary">Cabs1</name>
    <name type="synonym">Clph</name>
    <name type="synonym">Rsd6</name>
</gene>
<feature type="chain" id="PRO_0000339181" description="Calcium-binding and spermatid-specific protein 1">
    <location>
        <begin position="1"/>
        <end position="390"/>
    </location>
</feature>
<feature type="region of interest" description="Disordered" evidence="2">
    <location>
        <begin position="1"/>
        <end position="23"/>
    </location>
</feature>
<feature type="region of interest" description="Disordered" evidence="2">
    <location>
        <begin position="82"/>
        <end position="109"/>
    </location>
</feature>
<feature type="region of interest" description="Disordered" evidence="2">
    <location>
        <begin position="146"/>
        <end position="225"/>
    </location>
</feature>
<feature type="region of interest" description="Disordered" evidence="2">
    <location>
        <begin position="330"/>
        <end position="390"/>
    </location>
</feature>
<feature type="compositionally biased region" description="Acidic residues" evidence="2">
    <location>
        <begin position="162"/>
        <end position="174"/>
    </location>
</feature>
<feature type="compositionally biased region" description="Low complexity" evidence="2">
    <location>
        <begin position="184"/>
        <end position="193"/>
    </location>
</feature>
<feature type="compositionally biased region" description="Basic and acidic residues" evidence="2">
    <location>
        <begin position="330"/>
        <end position="344"/>
    </location>
</feature>
<feature type="compositionally biased region" description="Polar residues" evidence="2">
    <location>
        <begin position="346"/>
        <end position="364"/>
    </location>
</feature>
<feature type="modified residue" description="Phosphoserine" evidence="5">
    <location>
        <position position="251"/>
    </location>
</feature>
<feature type="modified residue" description="Phosphoserine" evidence="5">
    <location>
        <position position="267"/>
    </location>
</feature>
<feature type="modified residue" description="Phosphothreonine; by CK2" evidence="3 5">
    <location>
        <position position="280"/>
    </location>
</feature>
<feature type="modified residue" description="Phosphoserine" evidence="5">
    <location>
        <position position="312"/>
    </location>
</feature>
<feature type="modified residue" description="Phosphoserine" evidence="5">
    <location>
        <position position="346"/>
    </location>
</feature>
<feature type="modified residue" description="Phosphoserine" evidence="5">
    <location>
        <position position="356"/>
    </location>
</feature>
<feature type="modified residue" description="Phosphoserine" evidence="5">
    <location>
        <position position="371"/>
    </location>
</feature>
<feature type="modified residue" description="Phosphoserine" evidence="5">
    <location>
        <position position="375"/>
    </location>
</feature>
<accession>Q68FX6</accession>
<accession>Q9JI16</accession>